<dbReference type="EMBL" id="M22412">
    <property type="protein sequence ID" value="AAA41822.1"/>
    <property type="molecule type" value="mRNA"/>
</dbReference>
<dbReference type="EMBL" id="M36461">
    <property type="protein sequence ID" value="AAA41098.1"/>
    <property type="molecule type" value="mRNA"/>
</dbReference>
<dbReference type="EMBL" id="D10709">
    <property type="protein sequence ID" value="BAA01553.1"/>
    <property type="status" value="ALT_SEQ"/>
    <property type="molecule type" value="Genomic_DNA"/>
</dbReference>
<dbReference type="PIR" id="A35633">
    <property type="entry name" value="A35633"/>
</dbReference>
<dbReference type="RefSeq" id="NP_037105.1">
    <property type="nucleotide sequence ID" value="NM_012973.1"/>
</dbReference>
<dbReference type="RefSeq" id="XP_006248096.1">
    <property type="nucleotide sequence ID" value="XM_006248034.5"/>
</dbReference>
<dbReference type="RefSeq" id="XP_006248097.1">
    <property type="nucleotide sequence ID" value="XM_006248035.4"/>
</dbReference>
<dbReference type="RefSeq" id="XP_008766788.1">
    <property type="nucleotide sequence ID" value="XM_008768566.2"/>
</dbReference>
<dbReference type="RefSeq" id="XP_017453375.1">
    <property type="nucleotide sequence ID" value="XM_017597886.3"/>
</dbReference>
<dbReference type="RefSeq" id="XP_017453376.1">
    <property type="nucleotide sequence ID" value="XM_017597887.3"/>
</dbReference>
<dbReference type="SMR" id="P15383"/>
<dbReference type="CORUM" id="P15383"/>
<dbReference type="FunCoup" id="P15383">
    <property type="interactions" value="5"/>
</dbReference>
<dbReference type="STRING" id="10116.ENSRNOP00000002717"/>
<dbReference type="ChEMBL" id="CHEMBL5305045"/>
<dbReference type="TCDB" id="8.A.10.1.1">
    <property type="family name" value="the slow voltage-gated k+ channel accessory protein (mink) family"/>
</dbReference>
<dbReference type="GlyCosmos" id="P15383">
    <property type="glycosylation" value="2 sites, No reported glycans"/>
</dbReference>
<dbReference type="GlyGen" id="P15383">
    <property type="glycosylation" value="2 sites"/>
</dbReference>
<dbReference type="iPTMnet" id="P15383"/>
<dbReference type="PhosphoSitePlus" id="P15383"/>
<dbReference type="PaxDb" id="10116-ENSRNOP00000002717"/>
<dbReference type="Ensembl" id="ENSRNOT00000002717.3">
    <property type="protein sequence ID" value="ENSRNOP00000002717.1"/>
    <property type="gene ID" value="ENSRNOG00000001984.5"/>
</dbReference>
<dbReference type="Ensembl" id="ENSRNOT00000096553.1">
    <property type="protein sequence ID" value="ENSRNOP00000086617.1"/>
    <property type="gene ID" value="ENSRNOG00000001984.5"/>
</dbReference>
<dbReference type="Ensembl" id="ENSRNOT00000098014.1">
    <property type="protein sequence ID" value="ENSRNOP00000087251.1"/>
    <property type="gene ID" value="ENSRNOG00000001984.5"/>
</dbReference>
<dbReference type="Ensembl" id="ENSRNOT00000114695.1">
    <property type="protein sequence ID" value="ENSRNOP00000092414.1"/>
    <property type="gene ID" value="ENSRNOG00000001984.5"/>
</dbReference>
<dbReference type="GeneID" id="25471"/>
<dbReference type="KEGG" id="rno:25471"/>
<dbReference type="UCSC" id="RGD:2956">
    <property type="organism name" value="rat"/>
</dbReference>
<dbReference type="AGR" id="RGD:2956"/>
<dbReference type="CTD" id="3753"/>
<dbReference type="RGD" id="2956">
    <property type="gene designation" value="Kcne1"/>
</dbReference>
<dbReference type="eggNOG" id="ENOG502SG7D">
    <property type="taxonomic scope" value="Eukaryota"/>
</dbReference>
<dbReference type="GeneTree" id="ENSGT00940000154497"/>
<dbReference type="HOGENOM" id="CLU_159026_0_0_1"/>
<dbReference type="InParanoid" id="P15383"/>
<dbReference type="OMA" id="ESCRACY"/>
<dbReference type="OrthoDB" id="8772344at2759"/>
<dbReference type="PhylomeDB" id="P15383"/>
<dbReference type="TreeFam" id="TF335976"/>
<dbReference type="PRO" id="PR:P15383"/>
<dbReference type="Proteomes" id="UP000002494">
    <property type="component" value="Chromosome 11"/>
</dbReference>
<dbReference type="Bgee" id="ENSRNOG00000001984">
    <property type="expression patterns" value="Expressed in pancreas and 5 other cell types or tissues"/>
</dbReference>
<dbReference type="GO" id="GO:0016324">
    <property type="term" value="C:apical plasma membrane"/>
    <property type="evidence" value="ECO:0000314"/>
    <property type="project" value="RGD"/>
</dbReference>
<dbReference type="GO" id="GO:0009986">
    <property type="term" value="C:cell surface"/>
    <property type="evidence" value="ECO:0000266"/>
    <property type="project" value="RGD"/>
</dbReference>
<dbReference type="GO" id="GO:0045121">
    <property type="term" value="C:membrane raft"/>
    <property type="evidence" value="ECO:0007669"/>
    <property type="project" value="UniProtKB-SubCell"/>
</dbReference>
<dbReference type="GO" id="GO:0005886">
    <property type="term" value="C:plasma membrane"/>
    <property type="evidence" value="ECO:0000314"/>
    <property type="project" value="UniProtKB"/>
</dbReference>
<dbReference type="GO" id="GO:0008076">
    <property type="term" value="C:voltage-gated potassium channel complex"/>
    <property type="evidence" value="ECO:0000314"/>
    <property type="project" value="RGD"/>
</dbReference>
<dbReference type="GO" id="GO:0030018">
    <property type="term" value="C:Z disc"/>
    <property type="evidence" value="ECO:0000314"/>
    <property type="project" value="BHF-UCL"/>
</dbReference>
<dbReference type="GO" id="GO:0005251">
    <property type="term" value="F:delayed rectifier potassium channel activity"/>
    <property type="evidence" value="ECO:0000315"/>
    <property type="project" value="RGD"/>
</dbReference>
<dbReference type="GO" id="GO:0015459">
    <property type="term" value="F:potassium channel regulator activity"/>
    <property type="evidence" value="ECO:0000314"/>
    <property type="project" value="UniProtKB"/>
</dbReference>
<dbReference type="GO" id="GO:0044877">
    <property type="term" value="F:protein-containing complex binding"/>
    <property type="evidence" value="ECO:0000353"/>
    <property type="project" value="RGD"/>
</dbReference>
<dbReference type="GO" id="GO:0031433">
    <property type="term" value="F:telethonin binding"/>
    <property type="evidence" value="ECO:0000266"/>
    <property type="project" value="RGD"/>
</dbReference>
<dbReference type="GO" id="GO:0044325">
    <property type="term" value="F:transmembrane transporter binding"/>
    <property type="evidence" value="ECO:0000353"/>
    <property type="project" value="UniProtKB"/>
</dbReference>
<dbReference type="GO" id="GO:0005249">
    <property type="term" value="F:voltage-gated potassium channel activity"/>
    <property type="evidence" value="ECO:0000315"/>
    <property type="project" value="RGD"/>
</dbReference>
<dbReference type="GO" id="GO:0086002">
    <property type="term" value="P:cardiac muscle cell action potential involved in contraction"/>
    <property type="evidence" value="ECO:0000266"/>
    <property type="project" value="RGD"/>
</dbReference>
<dbReference type="GO" id="GO:0071468">
    <property type="term" value="P:cellular response to acidic pH"/>
    <property type="evidence" value="ECO:0000314"/>
    <property type="project" value="RGD"/>
</dbReference>
<dbReference type="GO" id="GO:0071320">
    <property type="term" value="P:cellular response to cAMP"/>
    <property type="evidence" value="ECO:0000266"/>
    <property type="project" value="RGD"/>
</dbReference>
<dbReference type="GO" id="GO:0071482">
    <property type="term" value="P:cellular response to light stimulus"/>
    <property type="evidence" value="ECO:0000270"/>
    <property type="project" value="RGD"/>
</dbReference>
<dbReference type="GO" id="GO:0002070">
    <property type="term" value="P:epithelial cell maturation"/>
    <property type="evidence" value="ECO:0000266"/>
    <property type="project" value="RGD"/>
</dbReference>
<dbReference type="GO" id="GO:0060047">
    <property type="term" value="P:heart contraction"/>
    <property type="evidence" value="ECO:0000266"/>
    <property type="project" value="RGD"/>
</dbReference>
<dbReference type="GO" id="GO:0008584">
    <property type="term" value="P:male gonad development"/>
    <property type="evidence" value="ECO:0000270"/>
    <property type="project" value="RGD"/>
</dbReference>
<dbReference type="GO" id="GO:0086009">
    <property type="term" value="P:membrane repolarization"/>
    <property type="evidence" value="ECO:0000266"/>
    <property type="project" value="RGD"/>
</dbReference>
<dbReference type="GO" id="GO:0086011">
    <property type="term" value="P:membrane repolarization during action potential"/>
    <property type="evidence" value="ECO:0000266"/>
    <property type="project" value="RGD"/>
</dbReference>
<dbReference type="GO" id="GO:0086013">
    <property type="term" value="P:membrane repolarization during cardiac muscle cell action potential"/>
    <property type="evidence" value="ECO:0000266"/>
    <property type="project" value="RGD"/>
</dbReference>
<dbReference type="GO" id="GO:0098915">
    <property type="term" value="P:membrane repolarization during ventricular cardiac muscle cell action potential"/>
    <property type="evidence" value="ECO:0000266"/>
    <property type="project" value="RGD"/>
</dbReference>
<dbReference type="GO" id="GO:1902260">
    <property type="term" value="P:negative regulation of delayed rectifier potassium channel activity"/>
    <property type="evidence" value="ECO:0000314"/>
    <property type="project" value="UniProtKB"/>
</dbReference>
<dbReference type="GO" id="GO:0090315">
    <property type="term" value="P:negative regulation of protein targeting to membrane"/>
    <property type="evidence" value="ECO:0000314"/>
    <property type="project" value="RGD"/>
</dbReference>
<dbReference type="GO" id="GO:1901381">
    <property type="term" value="P:positive regulation of potassium ion transmembrane transport"/>
    <property type="evidence" value="ECO:0000314"/>
    <property type="project" value="RGD"/>
</dbReference>
<dbReference type="GO" id="GO:0097623">
    <property type="term" value="P:potassium ion export across plasma membrane"/>
    <property type="evidence" value="ECO:0000266"/>
    <property type="project" value="RGD"/>
</dbReference>
<dbReference type="GO" id="GO:0071805">
    <property type="term" value="P:potassium ion transmembrane transport"/>
    <property type="evidence" value="ECO:0000266"/>
    <property type="project" value="RGD"/>
</dbReference>
<dbReference type="GO" id="GO:0086091">
    <property type="term" value="P:regulation of heart rate by cardiac conduction"/>
    <property type="evidence" value="ECO:0000266"/>
    <property type="project" value="RGD"/>
</dbReference>
<dbReference type="GO" id="GO:1901379">
    <property type="term" value="P:regulation of potassium ion transmembrane transport"/>
    <property type="evidence" value="ECO:0000266"/>
    <property type="project" value="RGD"/>
</dbReference>
<dbReference type="GO" id="GO:0043266">
    <property type="term" value="P:regulation of potassium ion transport"/>
    <property type="evidence" value="ECO:0000266"/>
    <property type="project" value="RGD"/>
</dbReference>
<dbReference type="GO" id="GO:0060307">
    <property type="term" value="P:regulation of ventricular cardiac muscle cell membrane repolarization"/>
    <property type="evidence" value="ECO:0000266"/>
    <property type="project" value="RGD"/>
</dbReference>
<dbReference type="GO" id="GO:0033363">
    <property type="term" value="P:secretory granule organization"/>
    <property type="evidence" value="ECO:0000266"/>
    <property type="project" value="RGD"/>
</dbReference>
<dbReference type="GO" id="GO:0086005">
    <property type="term" value="P:ventricular cardiac muscle cell action potential"/>
    <property type="evidence" value="ECO:0000266"/>
    <property type="project" value="RGD"/>
</dbReference>
<dbReference type="GO" id="GO:0021750">
    <property type="term" value="P:vestibular nucleus development"/>
    <property type="evidence" value="ECO:0000266"/>
    <property type="project" value="RGD"/>
</dbReference>
<dbReference type="InterPro" id="IPR000369">
    <property type="entry name" value="K_chnl_KCNE"/>
</dbReference>
<dbReference type="InterPro" id="IPR005424">
    <property type="entry name" value="KCNE1"/>
</dbReference>
<dbReference type="PANTHER" id="PTHR15282:SF11">
    <property type="entry name" value="POTASSIUM VOLTAGE-GATED CHANNEL SUBFAMILY E MEMBER 1"/>
    <property type="match status" value="1"/>
</dbReference>
<dbReference type="PANTHER" id="PTHR15282">
    <property type="entry name" value="POTASSIUM VOLTAGE-GATED CHANNEL SUBFAMILY E MEMBER 1, 3"/>
    <property type="match status" value="1"/>
</dbReference>
<dbReference type="Pfam" id="PF02060">
    <property type="entry name" value="ISK_Channel"/>
    <property type="match status" value="1"/>
</dbReference>
<dbReference type="PRINTS" id="PR01604">
    <property type="entry name" value="KCNE1CHANNEL"/>
</dbReference>
<dbReference type="PRINTS" id="PR00168">
    <property type="entry name" value="KCNECHANNEL"/>
</dbReference>
<name>KCNE1_RAT</name>
<reference key="1">
    <citation type="journal article" date="1988" name="Science">
        <title>Cloning of a membrane protein that induces a slow voltage-gated potassium current.</title>
        <authorList>
            <person name="Takumi T."/>
            <person name="Ohkubo H."/>
            <person name="Nakanishi S."/>
        </authorList>
    </citation>
    <scope>NUCLEOTIDE SEQUENCE [MRNA]</scope>
    <source>
        <tissue>Kidney</tissue>
    </source>
</reference>
<reference key="2">
    <citation type="journal article" date="1990" name="Proc. Natl. Acad. Sci. U.S.A.">
        <title>Cloning and expression of the delayed-rectifier IsK channel from neonatal rat heart and diethylstilbestrol-primed rat uterus.</title>
        <authorList>
            <person name="Folander K."/>
            <person name="Smith J.S."/>
            <person name="Antanavage J."/>
            <person name="Bennett C."/>
            <person name="Stein R.B."/>
            <person name="Swanson R."/>
        </authorList>
    </citation>
    <scope>NUCLEOTIDE SEQUENCE [MRNA]</scope>
    <scope>TISSUE SPECIFICITY</scope>
    <source>
        <tissue>Heart</tissue>
    </source>
</reference>
<reference key="3">
    <citation type="journal article" date="1990" name="Neuron">
        <title>Estrogen induction of a small, putative K+ channel mRNA in rat uterus.</title>
        <authorList>
            <person name="Pragnell M."/>
            <person name="Snay K.J."/>
            <person name="Trimmer J.S."/>
            <person name="Maclusky N.J."/>
            <person name="Naftolin F."/>
            <person name="Kaczmarek L.K."/>
            <person name="Boyle M.B."/>
        </authorList>
    </citation>
    <scope>NUCLEOTIDE SEQUENCE</scope>
    <scope>INDUCTION</scope>
    <scope>TISSUE SPECIFICITY</scope>
    <source>
        <tissue>Uterus</tissue>
    </source>
</reference>
<reference key="4">
    <citation type="journal article" date="1990" name="J. Biochem.">
        <title>Characterization of gene organization and generation of heterogeneous mRNA species of rat ISK protein.</title>
        <authorList>
            <person name="Iwai M."/>
            <person name="Masu M."/>
            <person name="Tsuchida K."/>
            <person name="Mori T."/>
            <person name="Ohkubo H."/>
            <person name="Nakanishi S."/>
        </authorList>
    </citation>
    <scope>NUCLEOTIDE SEQUENCE</scope>
</reference>
<reference key="5">
    <citation type="journal article" date="1992" name="Science">
        <title>An amino acid mutation in a potassium channel that prevents inhibition by protein kinase C.</title>
        <authorList>
            <person name="Busch A.E."/>
            <person name="Varnum M.D."/>
            <person name="North R.A."/>
            <person name="Adelman J.P."/>
        </authorList>
    </citation>
    <scope>MUTAGENESIS OF SER-103</scope>
</reference>
<reference key="6">
    <citation type="journal article" date="1995" name="Neuron">
        <title>Subunit composition of minK potassium channels.</title>
        <authorList>
            <person name="Wang K.-W."/>
            <person name="Goldstein S.A.N."/>
        </authorList>
    </citation>
    <scope>MUTAGENESIS OF ASP-77</scope>
</reference>
<reference key="7">
    <citation type="journal article" date="2004" name="J. Biol. Chem.">
        <title>MinK, MiRP1, and MiRP2 diversify Kv3.1 and Kv3.2 potassium channel gating.</title>
        <authorList>
            <person name="Lewis A."/>
            <person name="McCrossan Z.A."/>
            <person name="Abbott G.W."/>
        </authorList>
    </citation>
    <scope>SUBUNIT</scope>
    <scope>INTERACTION WITH KCNC2</scope>
    <scope>SUBCELLULAR LOCATION</scope>
</reference>
<reference key="8">
    <citation type="journal article" date="2009" name="J. Membr. Biol.">
        <title>Regulation of the Kv2.1 potassium channel by MinK and MiRP1.</title>
        <authorList>
            <person name="McCrossan Z.A."/>
            <person name="Roepke T.K."/>
            <person name="Lewis A."/>
            <person name="Panaghie G."/>
            <person name="Abbott G.W."/>
        </authorList>
    </citation>
    <scope>FUNCTION</scope>
    <scope>INTERACTION WITH KCNB1</scope>
    <scope>SUBCELLULAR LOCATION</scope>
    <scope>TISSUE SPECIFICITY</scope>
</reference>
<comment type="function">
    <text evidence="2 7">Ancillary protein that functions as a regulatory subunit of the voltage-gated potassium (Kv) channel complex composed of pore-forming and potassium-conducting alpha subunits and of regulatory beta subunits. KCNE1 beta subunit modulates the gating kinetics and enhances stability of the channel complex. Alters the gating of the delayed rectifier Kv channel containing KCNB1 alpha subunit (PubMed:19219384). Associates with KCNQ1/KVLQT1 alpha subunit to form the slowly activating delayed rectifier cardiac potassium (IKs) channel responsible for ventricular muscle action potential repolarization. The outward current reaches its steady state only after 50 seconds. Assembly with KCNH2/HERG alpha subunit Kv channel may regulate the rapidly activating component of the delayed rectifying potassium current (IKr) in heart (By similarity).</text>
</comment>
<comment type="subunit">
    <text evidence="2 3 5 7">Interacts with KCNB1 (PubMed:19219384). Interacts with KCNC2 (PubMed:14679187). Associates with KCNH2/HERG (By similarity). Interacts with KCNQ1; targets the complex KCNQ1-KCNE1 to the membrane raft (By similarity).</text>
</comment>
<comment type="subcellular location">
    <subcellularLocation>
        <location evidence="5 7">Cell membrane</location>
        <topology evidence="13">Single-pass type I membrane protein</topology>
    </subcellularLocation>
    <subcellularLocation>
        <location evidence="7">Apical cell membrane</location>
    </subcellularLocation>
    <subcellularLocation>
        <location evidence="2">Membrane raft</location>
    </subcellularLocation>
    <text evidence="2 7">Colocalizes with KCNB1 at the plasma membrane. Restrictively localized in the apical membrane portion of epithelial cells. Targets to the membrane raft when associated with KCNQ1 (By similarity).</text>
</comment>
<comment type="tissue specificity">
    <text evidence="7 8 9">Expressed in the heart (PubMed:19219384, PubMed:2183220). Expressed in kidney (PubMed:2344412). Expressed in estrogen-induced uterus (PubMed:2344412).</text>
</comment>
<comment type="induction">
    <text evidence="9">By estrogen.</text>
</comment>
<comment type="PTM">
    <text>Phosphorylation inhibits the potassium current.</text>
</comment>
<comment type="PTM">
    <text evidence="1">N-glycosylation at Asn-26 occurs post-translationally, and requires prior cotranslational glycosylation at Asn-5.</text>
</comment>
<comment type="miscellaneous">
    <text evidence="10">Mutagenesis experiments were carried out by expressing in Xenopus oocytes the mutant Asn-77 either individually (homomultimers) or in combination with wild-type KCNE1 (heteromultimers) in a 1:1 ratio (PubMed:7605639).</text>
</comment>
<comment type="similarity">
    <text evidence="13">Belongs to the potassium channel KCNE family.</text>
</comment>
<sequence>MALSNSTTVLPFLASLWQETDEPGGNMSADLARRSQLRDDSKLEALYILMVLGFFGFFTLGIMLSYIRSKKLEHSHDPFNVYIESDAWQEKGKALFQARVLESFRACYVIENQAAVEQPATHLPELKPLS</sequence>
<keyword id="KW-1003">Cell membrane</keyword>
<keyword id="KW-0325">Glycoprotein</keyword>
<keyword id="KW-0407">Ion channel</keyword>
<keyword id="KW-0406">Ion transport</keyword>
<keyword id="KW-0472">Membrane</keyword>
<keyword id="KW-0597">Phosphoprotein</keyword>
<keyword id="KW-0630">Potassium</keyword>
<keyword id="KW-0631">Potassium channel</keyword>
<keyword id="KW-0633">Potassium transport</keyword>
<keyword id="KW-1185">Reference proteome</keyword>
<keyword id="KW-0812">Transmembrane</keyword>
<keyword id="KW-1133">Transmembrane helix</keyword>
<keyword id="KW-0813">Transport</keyword>
<keyword id="KW-0851">Voltage-gated channel</keyword>
<feature type="chain" id="PRO_0000144283" description="Potassium voltage-gated channel subfamily E member 1">
    <location>
        <begin position="1"/>
        <end position="130"/>
    </location>
</feature>
<feature type="transmembrane region" description="Helical" evidence="4">
    <location>
        <begin position="45"/>
        <end position="67"/>
    </location>
</feature>
<feature type="topological domain" description="Cytoplasmic" evidence="4">
    <location>
        <begin position="68"/>
        <end position="130"/>
    </location>
</feature>
<feature type="modified residue" description="Phosphoserine; by PKC" evidence="13">
    <location>
        <position position="103"/>
    </location>
</feature>
<feature type="glycosylation site" description="N-linked (GlcNAc...) asparagine" evidence="4">
    <location>
        <position position="5"/>
    </location>
</feature>
<feature type="glycosylation site" description="N-linked (GlcNAc...) asparagine" evidence="4">
    <location>
        <position position="26"/>
    </location>
</feature>
<feature type="mutagenesis site" description="No current (homomultimers); one fourth of the WT current (heteromultimers)." evidence="10">
    <original>D</original>
    <variation>N</variation>
    <location>
        <position position="77"/>
    </location>
</feature>
<feature type="mutagenesis site" description="Abolishes inhibition by phosphorylation." evidence="6">
    <original>S</original>
    <variation>A</variation>
    <location>
        <position position="103"/>
    </location>
</feature>
<accession>P15383</accession>
<protein>
    <recommendedName>
        <fullName>Potassium voltage-gated channel subfamily E member 1</fullName>
    </recommendedName>
    <alternativeName>
        <fullName evidence="12">Delayed rectifier potassium channel subunit IsK</fullName>
    </alternativeName>
    <alternativeName>
        <fullName>IKs producing slow voltage-gated potassium channel subunit beta Mink</fullName>
    </alternativeName>
    <alternativeName>
        <fullName>Minimal potassium channel</fullName>
        <shortName evidence="11">MinK</shortName>
    </alternativeName>
</protein>
<organism>
    <name type="scientific">Rattus norvegicus</name>
    <name type="common">Rat</name>
    <dbReference type="NCBI Taxonomy" id="10116"/>
    <lineage>
        <taxon>Eukaryota</taxon>
        <taxon>Metazoa</taxon>
        <taxon>Chordata</taxon>
        <taxon>Craniata</taxon>
        <taxon>Vertebrata</taxon>
        <taxon>Euteleostomi</taxon>
        <taxon>Mammalia</taxon>
        <taxon>Eutheria</taxon>
        <taxon>Euarchontoglires</taxon>
        <taxon>Glires</taxon>
        <taxon>Rodentia</taxon>
        <taxon>Myomorpha</taxon>
        <taxon>Muroidea</taxon>
        <taxon>Muridae</taxon>
        <taxon>Murinae</taxon>
        <taxon>Rattus</taxon>
    </lineage>
</organism>
<gene>
    <name evidence="14" type="primary">Kcne1</name>
</gene>
<evidence type="ECO:0000250" key="1"/>
<evidence type="ECO:0000250" key="2">
    <source>
        <dbReference type="UniProtKB" id="P15382"/>
    </source>
</evidence>
<evidence type="ECO:0000250" key="3">
    <source>
        <dbReference type="UniProtKB" id="P23299"/>
    </source>
</evidence>
<evidence type="ECO:0000255" key="4"/>
<evidence type="ECO:0000269" key="5">
    <source>
    </source>
</evidence>
<evidence type="ECO:0000269" key="6">
    <source>
    </source>
</evidence>
<evidence type="ECO:0000269" key="7">
    <source>
    </source>
</evidence>
<evidence type="ECO:0000269" key="8">
    <source>
    </source>
</evidence>
<evidence type="ECO:0000269" key="9">
    <source>
    </source>
</evidence>
<evidence type="ECO:0000269" key="10">
    <source>
    </source>
</evidence>
<evidence type="ECO:0000303" key="11">
    <source>
    </source>
</evidence>
<evidence type="ECO:0000303" key="12">
    <source>
    </source>
</evidence>
<evidence type="ECO:0000305" key="13"/>
<evidence type="ECO:0000312" key="14">
    <source>
        <dbReference type="RGD" id="2956"/>
    </source>
</evidence>
<proteinExistence type="evidence at protein level"/>